<dbReference type="EMBL" id="X68307">
    <property type="protein sequence ID" value="CAA48383.1"/>
    <property type="molecule type" value="Genomic_DNA"/>
</dbReference>
<dbReference type="EMBL" id="L16226">
    <property type="protein sequence ID" value="AAA25192.1"/>
    <property type="status" value="ALT_INIT"/>
    <property type="molecule type" value="Genomic_DNA"/>
</dbReference>
<dbReference type="PIR" id="D48951">
    <property type="entry name" value="D48951"/>
</dbReference>
<dbReference type="RefSeq" id="WP_043991124.1">
    <property type="nucleotide sequence ID" value="NZ_ML956318.1"/>
</dbReference>
<dbReference type="PDB" id="2G02">
    <property type="method" value="X-ray"/>
    <property type="resolution" value="2.50 A"/>
    <property type="chains" value="A=7-415"/>
</dbReference>
<dbReference type="PDB" id="2G0D">
    <property type="method" value="X-ray"/>
    <property type="resolution" value="2.21 A"/>
    <property type="chains" value="A=7-415"/>
</dbReference>
<dbReference type="PDBsum" id="2G02"/>
<dbReference type="PDBsum" id="2G0D"/>
<dbReference type="SMR" id="Q03202"/>
<dbReference type="EvolutionaryTrace" id="Q03202"/>
<dbReference type="GO" id="GO:0031179">
    <property type="term" value="P:peptide modification"/>
    <property type="evidence" value="ECO:0007669"/>
    <property type="project" value="InterPro"/>
</dbReference>
<dbReference type="CDD" id="cd04793">
    <property type="entry name" value="LanC"/>
    <property type="match status" value="1"/>
</dbReference>
<dbReference type="Gene3D" id="1.50.10.20">
    <property type="match status" value="1"/>
</dbReference>
<dbReference type="InterPro" id="IPR033889">
    <property type="entry name" value="LanC"/>
</dbReference>
<dbReference type="InterPro" id="IPR007822">
    <property type="entry name" value="LANC-like"/>
</dbReference>
<dbReference type="InterPro" id="IPR020468">
    <property type="entry name" value="Nisin_biosynthesis_NisC"/>
</dbReference>
<dbReference type="Pfam" id="PF05147">
    <property type="entry name" value="LANC_like"/>
    <property type="match status" value="1"/>
</dbReference>
<dbReference type="PRINTS" id="PR01950">
    <property type="entry name" value="LANCSUPER"/>
</dbReference>
<dbReference type="PRINTS" id="PR01952">
    <property type="entry name" value="NISCPROTEIN"/>
</dbReference>
<dbReference type="SMART" id="SM01260">
    <property type="entry name" value="LANC_like"/>
    <property type="match status" value="1"/>
</dbReference>
<dbReference type="SUPFAM" id="SSF158745">
    <property type="entry name" value="LanC-like"/>
    <property type="match status" value="1"/>
</dbReference>
<gene>
    <name type="primary">nisC</name>
</gene>
<keyword id="KW-0002">3D-structure</keyword>
<feature type="chain" id="PRO_0000096864" description="Nisin biosynthesis protein NisC">
    <location>
        <begin position="1"/>
        <end position="418"/>
    </location>
</feature>
<feature type="helix" evidence="2">
    <location>
        <begin position="9"/>
        <end position="26"/>
    </location>
</feature>
<feature type="helix" evidence="2">
    <location>
        <begin position="34"/>
        <end position="37"/>
    </location>
</feature>
<feature type="turn" evidence="2">
    <location>
        <begin position="39"/>
        <end position="41"/>
    </location>
</feature>
<feature type="helix" evidence="2">
    <location>
        <begin position="43"/>
        <end position="51"/>
    </location>
</feature>
<feature type="turn" evidence="2">
    <location>
        <begin position="52"/>
        <end position="55"/>
    </location>
</feature>
<feature type="helix" evidence="2">
    <location>
        <begin position="59"/>
        <end position="80"/>
    </location>
</feature>
<feature type="turn" evidence="2">
    <location>
        <begin position="87"/>
        <end position="89"/>
    </location>
</feature>
<feature type="helix" evidence="2">
    <location>
        <begin position="91"/>
        <end position="98"/>
    </location>
</feature>
<feature type="helix" evidence="2">
    <location>
        <begin position="99"/>
        <end position="101"/>
    </location>
</feature>
<feature type="turn" evidence="2">
    <location>
        <begin position="102"/>
        <end position="104"/>
    </location>
</feature>
<feature type="helix" evidence="2">
    <location>
        <begin position="106"/>
        <end position="128"/>
    </location>
</feature>
<feature type="helix" evidence="2">
    <location>
        <begin position="132"/>
        <end position="134"/>
    </location>
</feature>
<feature type="helix" evidence="2">
    <location>
        <begin position="137"/>
        <end position="140"/>
    </location>
</feature>
<feature type="strand" evidence="2">
    <location>
        <begin position="141"/>
        <end position="145"/>
    </location>
</feature>
<feature type="helix" evidence="2">
    <location>
        <begin position="146"/>
        <end position="153"/>
    </location>
</feature>
<feature type="helix" evidence="2">
    <location>
        <begin position="159"/>
        <end position="161"/>
    </location>
</feature>
<feature type="helix" evidence="2">
    <location>
        <begin position="162"/>
        <end position="174"/>
    </location>
</feature>
<feature type="strand" evidence="2">
    <location>
        <begin position="180"/>
        <end position="182"/>
    </location>
</feature>
<feature type="helix" evidence="2">
    <location>
        <begin position="189"/>
        <end position="191"/>
    </location>
</feature>
<feature type="strand" evidence="2">
    <location>
        <begin position="192"/>
        <end position="194"/>
    </location>
</feature>
<feature type="helix" evidence="2">
    <location>
        <begin position="195"/>
        <end position="200"/>
    </location>
</feature>
<feature type="strand" evidence="2">
    <location>
        <begin position="205"/>
        <end position="207"/>
    </location>
</feature>
<feature type="turn" evidence="2">
    <location>
        <begin position="210"/>
        <end position="212"/>
    </location>
</feature>
<feature type="helix" evidence="2">
    <location>
        <begin position="214"/>
        <end position="227"/>
    </location>
</feature>
<feature type="helix" evidence="2">
    <location>
        <begin position="232"/>
        <end position="248"/>
    </location>
</feature>
<feature type="helix" evidence="2">
    <location>
        <begin position="252"/>
        <end position="254"/>
    </location>
</feature>
<feature type="strand" evidence="2">
    <location>
        <begin position="260"/>
        <end position="262"/>
    </location>
</feature>
<feature type="helix" evidence="2">
    <location>
        <begin position="264"/>
        <end position="269"/>
    </location>
</feature>
<feature type="strand" evidence="2">
    <location>
        <begin position="283"/>
        <end position="286"/>
    </location>
</feature>
<feature type="helix" evidence="2">
    <location>
        <begin position="287"/>
        <end position="300"/>
    </location>
</feature>
<feature type="helix" evidence="2">
    <location>
        <begin position="304"/>
        <end position="320"/>
    </location>
</feature>
<feature type="strand" evidence="2">
    <location>
        <begin position="329"/>
        <end position="332"/>
    </location>
</feature>
<feature type="helix" evidence="2">
    <location>
        <begin position="333"/>
        <end position="347"/>
    </location>
</feature>
<feature type="helix" evidence="2">
    <location>
        <begin position="353"/>
        <end position="361"/>
    </location>
</feature>
<feature type="helix" evidence="2">
    <location>
        <begin position="363"/>
        <end position="368"/>
    </location>
</feature>
<feature type="turn" evidence="2">
    <location>
        <begin position="378"/>
        <end position="380"/>
    </location>
</feature>
<feature type="helix" evidence="2">
    <location>
        <begin position="382"/>
        <end position="393"/>
    </location>
</feature>
<feature type="helix" evidence="2">
    <location>
        <begin position="401"/>
        <end position="405"/>
    </location>
</feature>
<feature type="turn" evidence="2">
    <location>
        <begin position="409"/>
        <end position="413"/>
    </location>
</feature>
<evidence type="ECO:0000305" key="1"/>
<evidence type="ECO:0007829" key="2">
    <source>
        <dbReference type="PDB" id="2G0D"/>
    </source>
</evidence>
<protein>
    <recommendedName>
        <fullName>Nisin biosynthesis protein NisC</fullName>
    </recommendedName>
</protein>
<accession>Q03202</accession>
<proteinExistence type="evidence at protein level"/>
<sequence>MRIMMNKKNIKRNVEKIIAQWDERTRKNKENFDFGELTLSTGLPGIILMLAELKNKDNSKIYQKKIDNYIEYIVSKLSTYGLLTGSLYSGAAGIALSILHLREDDEKYKNLLDSLNRYIEYFVREKIEGFNLENITPPDYDVIEGLSGILSYLLLINDEQYDDLKILIINFLSNLTKENNGLISLYIKSENQMSQSESEMYPLGCLNMGLAHGLAGVGCILAYAHIKGYSNEASLSALQKIIFIYEKFELERKKQFLWKDGLVADELKKEKVIREASFIRDAWCYGGPGISLLYLYGGLALDNDYFVDKAEKILESAMQRKLGIDSYMICHGYSGLIEICSLFKRLLNTKKFDSYMEEFNVNSEQILEEYGDESGTGFLEGISGCILVLSKFEYSINFTYWRQALLLFDDFLKGGKRK</sequence>
<organism>
    <name type="scientific">Lactococcus lactis subsp. lactis</name>
    <name type="common">Streptococcus lactis</name>
    <dbReference type="NCBI Taxonomy" id="1360"/>
    <lineage>
        <taxon>Bacteria</taxon>
        <taxon>Bacillati</taxon>
        <taxon>Bacillota</taxon>
        <taxon>Bacilli</taxon>
        <taxon>Lactobacillales</taxon>
        <taxon>Streptococcaceae</taxon>
        <taxon>Lactococcus</taxon>
    </lineage>
</organism>
<comment type="function">
    <text>Could be implicated in the processing or the export process of the nisin lantibiotic.</text>
</comment>
<comment type="similarity">
    <text evidence="1">To B.subtilis SpaC and S.epidermidis EpiC.</text>
</comment>
<comment type="caution">
    <text evidence="1">It is uncertain whether Met-1 or Met-5 is the initiator.</text>
</comment>
<comment type="sequence caution" evidence="1">
    <conflict type="erroneous initiation">
        <sequence resource="EMBL-CDS" id="AAA25192"/>
    </conflict>
</comment>
<reference key="1">
    <citation type="journal article" date="1992" name="Appl. Environ. Microbiol.">
        <title>Biosynthesis of the lantibiotic nisin: genomic organization and membrane localization of the NisB protein.</title>
        <authorList>
            <person name="Engelke G."/>
            <person name="Gutowski-Eckel Z."/>
            <person name="Hammelmann M."/>
            <person name="Entian K.-D."/>
        </authorList>
    </citation>
    <scope>NUCLEOTIDE SEQUENCE [GENOMIC DNA]</scope>
    <source>
        <strain>6F3</strain>
    </source>
</reference>
<reference key="2">
    <citation type="journal article" date="1993" name="Eur. J. Biochem.">
        <title>Characterization of the nisin gene cluster nisABTCIPR of Lactococcus lactis. Requirement of expression of the nisA and nisI genes for development of immunity.</title>
        <authorList>
            <person name="Kuipers O.P."/>
            <person name="Beerthuyzen M.M."/>
            <person name="Siezen R.J."/>
            <person name="de Vos W.M."/>
        </authorList>
    </citation>
    <scope>NUCLEOTIDE SEQUENCE [GENOMIC DNA]</scope>
    <source>
        <strain>NIZO R5</strain>
    </source>
</reference>
<reference key="3">
    <citation type="journal article" date="1994" name="Appl. Environ. Microbiol.">
        <title>Regulation of nisin biosynthesis and immunity in Lactococcus lactis 6F3.</title>
        <authorList>
            <person name="Engelke G."/>
            <person name="Gutowski-Eckel Z."/>
            <person name="Kiesau P."/>
            <person name="Siegers K."/>
            <person name="Hammelmann M."/>
            <person name="Entian K.-D."/>
        </authorList>
    </citation>
    <scope>NUCLEOTIDE SEQUENCE [GENOMIC DNA] OF 397-418</scope>
    <source>
        <strain>6F3</strain>
    </source>
</reference>
<name>NISC_LACLL</name>